<evidence type="ECO:0000255" key="1">
    <source>
        <dbReference type="HAMAP-Rule" id="MF_00484"/>
    </source>
</evidence>
<sequence>MQVLHVCSEMFPLLKTGGLADVIGALPAAQIADGVDARVLLPAFPDIRRGVTDAQVVSRRDTFAGHITLLFGHYNGVGIYLIDAPHLYDRPGSPYHDTNLFAYTDNVLRFALLGWVGAEMASGLDPFWRPDVVHAHDWHAGLAPAYLAARGRPAKSVFTVHNLAYQGMFYAHHMNDIQLPWSFFNIHGLEFNGQISFLKAGLYYADHITAVSPTYAREITEPQFAYGMEGLLQQRHREGRLSGVLNGVDEKIWSPETDLLLASRYTRDTLEDKAENKRQLQIAMGLKVDDKVPLFAVVSRLTSQKGLDLVLEALPGLLEQGGQLALLGAGDPVLQEGFLAAAAEYPGQVGVQIGYHEAFSHRIMGGADVILVPSRFEPCGLTQLYGLKYGTLPLVRRTGGLADTVSDCSLENLADGVASGFVFEDSNAWSLLRAIRRAFVLWSRPSLWRFVQRQAMAMDFSWQVAAKSYRELYYRLK</sequence>
<gene>
    <name evidence="1" type="primary">glgA</name>
    <name type="ordered locus">BWG_3121</name>
</gene>
<dbReference type="EC" id="2.4.1.21" evidence="1"/>
<dbReference type="EMBL" id="CP001396">
    <property type="protein sequence ID" value="ACR63374.1"/>
    <property type="molecule type" value="Genomic_DNA"/>
</dbReference>
<dbReference type="RefSeq" id="WP_001197646.1">
    <property type="nucleotide sequence ID" value="NC_012759.1"/>
</dbReference>
<dbReference type="SMR" id="C4ZVX9"/>
<dbReference type="CAZy" id="GT5">
    <property type="family name" value="Glycosyltransferase Family 5"/>
</dbReference>
<dbReference type="GeneID" id="75202274"/>
<dbReference type="KEGG" id="ebw:BWG_3121"/>
<dbReference type="HOGENOM" id="CLU_009583_18_2_6"/>
<dbReference type="UniPathway" id="UPA00164"/>
<dbReference type="GO" id="GO:0005829">
    <property type="term" value="C:cytosol"/>
    <property type="evidence" value="ECO:0007669"/>
    <property type="project" value="TreeGrafter"/>
</dbReference>
<dbReference type="GO" id="GO:0009011">
    <property type="term" value="F:alpha-1,4-glucan glucosyltransferase (ADP-glucose donor) activity"/>
    <property type="evidence" value="ECO:0007669"/>
    <property type="project" value="UniProtKB-UniRule"/>
</dbReference>
<dbReference type="GO" id="GO:0004373">
    <property type="term" value="F:alpha-1,4-glucan glucosyltransferase (UDP-glucose donor) activity"/>
    <property type="evidence" value="ECO:0007669"/>
    <property type="project" value="InterPro"/>
</dbReference>
<dbReference type="GO" id="GO:0005978">
    <property type="term" value="P:glycogen biosynthetic process"/>
    <property type="evidence" value="ECO:0007669"/>
    <property type="project" value="UniProtKB-UniRule"/>
</dbReference>
<dbReference type="CDD" id="cd03791">
    <property type="entry name" value="GT5_Glycogen_synthase_DULL1-like"/>
    <property type="match status" value="1"/>
</dbReference>
<dbReference type="FunFam" id="3.40.50.2000:FF:000008">
    <property type="entry name" value="Glycogen synthase"/>
    <property type="match status" value="1"/>
</dbReference>
<dbReference type="FunFam" id="3.40.50.2000:FF:000011">
    <property type="entry name" value="Glycogen synthase"/>
    <property type="match status" value="1"/>
</dbReference>
<dbReference type="Gene3D" id="3.40.50.2000">
    <property type="entry name" value="Glycogen Phosphorylase B"/>
    <property type="match status" value="2"/>
</dbReference>
<dbReference type="HAMAP" id="MF_00484">
    <property type="entry name" value="Glycogen_synth"/>
    <property type="match status" value="1"/>
</dbReference>
<dbReference type="InterPro" id="IPR001296">
    <property type="entry name" value="Glyco_trans_1"/>
</dbReference>
<dbReference type="InterPro" id="IPR011835">
    <property type="entry name" value="GS/SS"/>
</dbReference>
<dbReference type="InterPro" id="IPR013534">
    <property type="entry name" value="Starch_synth_cat_dom"/>
</dbReference>
<dbReference type="NCBIfam" id="TIGR02095">
    <property type="entry name" value="glgA"/>
    <property type="match status" value="1"/>
</dbReference>
<dbReference type="NCBIfam" id="NF001899">
    <property type="entry name" value="PRK00654.1-2"/>
    <property type="match status" value="1"/>
</dbReference>
<dbReference type="PANTHER" id="PTHR45825:SF11">
    <property type="entry name" value="ALPHA AMYLASE DOMAIN-CONTAINING PROTEIN"/>
    <property type="match status" value="1"/>
</dbReference>
<dbReference type="PANTHER" id="PTHR45825">
    <property type="entry name" value="GRANULE-BOUND STARCH SYNTHASE 1, CHLOROPLASTIC/AMYLOPLASTIC"/>
    <property type="match status" value="1"/>
</dbReference>
<dbReference type="Pfam" id="PF08323">
    <property type="entry name" value="Glyco_transf_5"/>
    <property type="match status" value="1"/>
</dbReference>
<dbReference type="Pfam" id="PF00534">
    <property type="entry name" value="Glycos_transf_1"/>
    <property type="match status" value="1"/>
</dbReference>
<dbReference type="SUPFAM" id="SSF53756">
    <property type="entry name" value="UDP-Glycosyltransferase/glycogen phosphorylase"/>
    <property type="match status" value="1"/>
</dbReference>
<protein>
    <recommendedName>
        <fullName evidence="1">Glycogen synthase</fullName>
        <ecNumber evidence="1">2.4.1.21</ecNumber>
    </recommendedName>
    <alternativeName>
        <fullName evidence="1">Starch [bacterial glycogen] synthase</fullName>
    </alternativeName>
</protein>
<organism>
    <name type="scientific">Escherichia coli (strain K12 / MC4100 / BW2952)</name>
    <dbReference type="NCBI Taxonomy" id="595496"/>
    <lineage>
        <taxon>Bacteria</taxon>
        <taxon>Pseudomonadati</taxon>
        <taxon>Pseudomonadota</taxon>
        <taxon>Gammaproteobacteria</taxon>
        <taxon>Enterobacterales</taxon>
        <taxon>Enterobacteriaceae</taxon>
        <taxon>Escherichia</taxon>
    </lineage>
</organism>
<comment type="function">
    <text evidence="1">Synthesizes alpha-1,4-glucan chains using ADP-glucose.</text>
</comment>
<comment type="catalytic activity">
    <reaction evidence="1">
        <text>[(1-&gt;4)-alpha-D-glucosyl](n) + ADP-alpha-D-glucose = [(1-&gt;4)-alpha-D-glucosyl](n+1) + ADP + H(+)</text>
        <dbReference type="Rhea" id="RHEA:18189"/>
        <dbReference type="Rhea" id="RHEA-COMP:9584"/>
        <dbReference type="Rhea" id="RHEA-COMP:9587"/>
        <dbReference type="ChEBI" id="CHEBI:15378"/>
        <dbReference type="ChEBI" id="CHEBI:15444"/>
        <dbReference type="ChEBI" id="CHEBI:57498"/>
        <dbReference type="ChEBI" id="CHEBI:456216"/>
        <dbReference type="EC" id="2.4.1.21"/>
    </reaction>
</comment>
<comment type="pathway">
    <text evidence="1">Glycan biosynthesis; glycogen biosynthesis.</text>
</comment>
<comment type="similarity">
    <text evidence="1">Belongs to the glycosyltransferase 1 family. Bacterial/plant glycogen synthase subfamily.</text>
</comment>
<keyword id="KW-0320">Glycogen biosynthesis</keyword>
<keyword id="KW-0328">Glycosyltransferase</keyword>
<keyword id="KW-0808">Transferase</keyword>
<accession>C4ZVX9</accession>
<reference key="1">
    <citation type="journal article" date="2009" name="J. Bacteriol.">
        <title>Genomic sequencing reveals regulatory mutations and recombinational events in the widely used MC4100 lineage of Escherichia coli K-12.</title>
        <authorList>
            <person name="Ferenci T."/>
            <person name="Zhou Z."/>
            <person name="Betteridge T."/>
            <person name="Ren Y."/>
            <person name="Liu Y."/>
            <person name="Feng L."/>
            <person name="Reeves P.R."/>
            <person name="Wang L."/>
        </authorList>
    </citation>
    <scope>NUCLEOTIDE SEQUENCE [LARGE SCALE GENOMIC DNA]</scope>
    <source>
        <strain>K12 / MC4100 / BW2952</strain>
    </source>
</reference>
<proteinExistence type="inferred from homology"/>
<name>GLGA_ECOBW</name>
<feature type="chain" id="PRO_1000206427" description="Glycogen synthase">
    <location>
        <begin position="1"/>
        <end position="477"/>
    </location>
</feature>
<feature type="binding site" evidence="1">
    <location>
        <position position="15"/>
    </location>
    <ligand>
        <name>ADP-alpha-D-glucose</name>
        <dbReference type="ChEBI" id="CHEBI:57498"/>
    </ligand>
</feature>